<sequence length="121" mass="13062">MDKTQSRLRRARQTRIKIAELQVARLAVHRTNTHIYAQVFSPCGTKVLASASTLEAEVRAQLADKSGKGGNVAAATLIGKRIAEKAKAAGIESVAFDRSGFRYHGRVKALAEAAREAGLKF</sequence>
<gene>
    <name evidence="1" type="primary">rplR</name>
    <name type="ordered locus">BTH_I3052</name>
</gene>
<reference key="1">
    <citation type="journal article" date="2005" name="BMC Genomics">
        <title>Bacterial genome adaptation to niches: divergence of the potential virulence genes in three Burkholderia species of different survival strategies.</title>
        <authorList>
            <person name="Kim H.S."/>
            <person name="Schell M.A."/>
            <person name="Yu Y."/>
            <person name="Ulrich R.L."/>
            <person name="Sarria S.H."/>
            <person name="Nierman W.C."/>
            <person name="DeShazer D."/>
        </authorList>
    </citation>
    <scope>NUCLEOTIDE SEQUENCE [LARGE SCALE GENOMIC DNA]</scope>
    <source>
        <strain>ATCC 700388 / DSM 13276 / CCUG 48851 / CIP 106301 / E264</strain>
    </source>
</reference>
<name>RL18_BURTA</name>
<dbReference type="EMBL" id="CP000086">
    <property type="protein sequence ID" value="ABC38277.1"/>
    <property type="molecule type" value="Genomic_DNA"/>
</dbReference>
<dbReference type="RefSeq" id="WP_004197946.1">
    <property type="nucleotide sequence ID" value="NZ_CP008786.1"/>
</dbReference>
<dbReference type="SMR" id="Q2SU43"/>
<dbReference type="GeneID" id="93061816"/>
<dbReference type="KEGG" id="bte:BTH_I3052"/>
<dbReference type="HOGENOM" id="CLU_098841_0_1_4"/>
<dbReference type="Proteomes" id="UP000001930">
    <property type="component" value="Chromosome I"/>
</dbReference>
<dbReference type="GO" id="GO:0022625">
    <property type="term" value="C:cytosolic large ribosomal subunit"/>
    <property type="evidence" value="ECO:0007669"/>
    <property type="project" value="TreeGrafter"/>
</dbReference>
<dbReference type="GO" id="GO:0008097">
    <property type="term" value="F:5S rRNA binding"/>
    <property type="evidence" value="ECO:0007669"/>
    <property type="project" value="TreeGrafter"/>
</dbReference>
<dbReference type="GO" id="GO:0003735">
    <property type="term" value="F:structural constituent of ribosome"/>
    <property type="evidence" value="ECO:0007669"/>
    <property type="project" value="InterPro"/>
</dbReference>
<dbReference type="GO" id="GO:0006412">
    <property type="term" value="P:translation"/>
    <property type="evidence" value="ECO:0007669"/>
    <property type="project" value="UniProtKB-UniRule"/>
</dbReference>
<dbReference type="CDD" id="cd00432">
    <property type="entry name" value="Ribosomal_L18_L5e"/>
    <property type="match status" value="1"/>
</dbReference>
<dbReference type="FunFam" id="3.30.420.100:FF:000001">
    <property type="entry name" value="50S ribosomal protein L18"/>
    <property type="match status" value="1"/>
</dbReference>
<dbReference type="Gene3D" id="3.30.420.100">
    <property type="match status" value="1"/>
</dbReference>
<dbReference type="HAMAP" id="MF_01337_B">
    <property type="entry name" value="Ribosomal_uL18_B"/>
    <property type="match status" value="1"/>
</dbReference>
<dbReference type="InterPro" id="IPR004389">
    <property type="entry name" value="Ribosomal_uL18_bac-type"/>
</dbReference>
<dbReference type="InterPro" id="IPR005484">
    <property type="entry name" value="Ribosomal_uL18_bac/euk"/>
</dbReference>
<dbReference type="NCBIfam" id="TIGR00060">
    <property type="entry name" value="L18_bact"/>
    <property type="match status" value="1"/>
</dbReference>
<dbReference type="PANTHER" id="PTHR12899">
    <property type="entry name" value="39S RIBOSOMAL PROTEIN L18, MITOCHONDRIAL"/>
    <property type="match status" value="1"/>
</dbReference>
<dbReference type="PANTHER" id="PTHR12899:SF3">
    <property type="entry name" value="LARGE RIBOSOMAL SUBUNIT PROTEIN UL18M"/>
    <property type="match status" value="1"/>
</dbReference>
<dbReference type="Pfam" id="PF00861">
    <property type="entry name" value="Ribosomal_L18p"/>
    <property type="match status" value="1"/>
</dbReference>
<dbReference type="SUPFAM" id="SSF53137">
    <property type="entry name" value="Translational machinery components"/>
    <property type="match status" value="1"/>
</dbReference>
<keyword id="KW-0687">Ribonucleoprotein</keyword>
<keyword id="KW-0689">Ribosomal protein</keyword>
<keyword id="KW-0694">RNA-binding</keyword>
<keyword id="KW-0699">rRNA-binding</keyword>
<proteinExistence type="inferred from homology"/>
<accession>Q2SU43</accession>
<organism>
    <name type="scientific">Burkholderia thailandensis (strain ATCC 700388 / DSM 13276 / CCUG 48851 / CIP 106301 / E264)</name>
    <dbReference type="NCBI Taxonomy" id="271848"/>
    <lineage>
        <taxon>Bacteria</taxon>
        <taxon>Pseudomonadati</taxon>
        <taxon>Pseudomonadota</taxon>
        <taxon>Betaproteobacteria</taxon>
        <taxon>Burkholderiales</taxon>
        <taxon>Burkholderiaceae</taxon>
        <taxon>Burkholderia</taxon>
        <taxon>pseudomallei group</taxon>
    </lineage>
</organism>
<comment type="function">
    <text evidence="1">This is one of the proteins that bind and probably mediate the attachment of the 5S RNA into the large ribosomal subunit, where it forms part of the central protuberance.</text>
</comment>
<comment type="subunit">
    <text evidence="1">Part of the 50S ribosomal subunit; part of the 5S rRNA/L5/L18/L25 subcomplex. Contacts the 5S and 23S rRNAs.</text>
</comment>
<comment type="similarity">
    <text evidence="1">Belongs to the universal ribosomal protein uL18 family.</text>
</comment>
<protein>
    <recommendedName>
        <fullName evidence="1">Large ribosomal subunit protein uL18</fullName>
    </recommendedName>
    <alternativeName>
        <fullName evidence="2">50S ribosomal protein L18</fullName>
    </alternativeName>
</protein>
<feature type="chain" id="PRO_0000251295" description="Large ribosomal subunit protein uL18">
    <location>
        <begin position="1"/>
        <end position="121"/>
    </location>
</feature>
<evidence type="ECO:0000255" key="1">
    <source>
        <dbReference type="HAMAP-Rule" id="MF_01337"/>
    </source>
</evidence>
<evidence type="ECO:0000305" key="2"/>